<feature type="chain" id="PRO_1000013955" description="Glucose-6-phosphate isomerase">
    <location>
        <begin position="1"/>
        <end position="450"/>
    </location>
</feature>
<feature type="active site" description="Proton donor" evidence="1">
    <location>
        <position position="291"/>
    </location>
</feature>
<feature type="active site" evidence="1">
    <location>
        <position position="312"/>
    </location>
</feature>
<feature type="active site" evidence="1">
    <location>
        <position position="426"/>
    </location>
</feature>
<proteinExistence type="inferred from homology"/>
<protein>
    <recommendedName>
        <fullName evidence="1">Glucose-6-phosphate isomerase</fullName>
        <shortName evidence="1">GPI</shortName>
        <ecNumber evidence="1">5.3.1.9</ecNumber>
    </recommendedName>
    <alternativeName>
        <fullName evidence="1">Phosphoglucose isomerase</fullName>
        <shortName evidence="1">PGI</shortName>
    </alternativeName>
    <alternativeName>
        <fullName evidence="1">Phosphohexose isomerase</fullName>
        <shortName evidence="1">PHI</shortName>
    </alternativeName>
</protein>
<reference key="1">
    <citation type="submission" date="2007-06" db="EMBL/GenBank/DDBJ databases">
        <authorList>
            <person name="Brinkac L.M."/>
            <person name="Daugherty S."/>
            <person name="Dodson R.J."/>
            <person name="Madupu R."/>
            <person name="Brown J.L."/>
            <person name="Bruce D."/>
            <person name="Detter C."/>
            <person name="Munk C."/>
            <person name="Smith L.A."/>
            <person name="Smith T.J."/>
            <person name="White O."/>
            <person name="Brettin T.S."/>
        </authorList>
    </citation>
    <scope>NUCLEOTIDE SEQUENCE [LARGE SCALE GENOMIC DNA]</scope>
    <source>
        <strain>Langeland / NCTC 10281 / Type F</strain>
    </source>
</reference>
<comment type="function">
    <text evidence="1">Catalyzes the reversible isomerization of glucose-6-phosphate to fructose-6-phosphate.</text>
</comment>
<comment type="catalytic activity">
    <reaction evidence="1">
        <text>alpha-D-glucose 6-phosphate = beta-D-fructose 6-phosphate</text>
        <dbReference type="Rhea" id="RHEA:11816"/>
        <dbReference type="ChEBI" id="CHEBI:57634"/>
        <dbReference type="ChEBI" id="CHEBI:58225"/>
        <dbReference type="EC" id="5.3.1.9"/>
    </reaction>
</comment>
<comment type="pathway">
    <text evidence="1">Carbohydrate biosynthesis; gluconeogenesis.</text>
</comment>
<comment type="pathway">
    <text evidence="1">Carbohydrate degradation; glycolysis; D-glyceraldehyde 3-phosphate and glycerone phosphate from D-glucose: step 2/4.</text>
</comment>
<comment type="subcellular location">
    <subcellularLocation>
        <location evidence="1">Cytoplasm</location>
    </subcellularLocation>
</comment>
<comment type="similarity">
    <text evidence="1">Belongs to the GPI family.</text>
</comment>
<dbReference type="EC" id="5.3.1.9" evidence="1"/>
<dbReference type="EMBL" id="CP000728">
    <property type="protein sequence ID" value="ABS41702.1"/>
    <property type="molecule type" value="Genomic_DNA"/>
</dbReference>
<dbReference type="RefSeq" id="WP_012101005.1">
    <property type="nucleotide sequence ID" value="NC_009699.1"/>
</dbReference>
<dbReference type="SMR" id="A7GIL4"/>
<dbReference type="KEGG" id="cbf:CLI_3449"/>
<dbReference type="HOGENOM" id="CLU_037303_0_1_9"/>
<dbReference type="UniPathway" id="UPA00109">
    <property type="reaction ID" value="UER00181"/>
</dbReference>
<dbReference type="UniPathway" id="UPA00138"/>
<dbReference type="Proteomes" id="UP000002410">
    <property type="component" value="Chromosome"/>
</dbReference>
<dbReference type="GO" id="GO:0005829">
    <property type="term" value="C:cytosol"/>
    <property type="evidence" value="ECO:0007669"/>
    <property type="project" value="TreeGrafter"/>
</dbReference>
<dbReference type="GO" id="GO:0097367">
    <property type="term" value="F:carbohydrate derivative binding"/>
    <property type="evidence" value="ECO:0007669"/>
    <property type="project" value="InterPro"/>
</dbReference>
<dbReference type="GO" id="GO:0004347">
    <property type="term" value="F:glucose-6-phosphate isomerase activity"/>
    <property type="evidence" value="ECO:0007669"/>
    <property type="project" value="UniProtKB-UniRule"/>
</dbReference>
<dbReference type="GO" id="GO:0048029">
    <property type="term" value="F:monosaccharide binding"/>
    <property type="evidence" value="ECO:0007669"/>
    <property type="project" value="TreeGrafter"/>
</dbReference>
<dbReference type="GO" id="GO:0006094">
    <property type="term" value="P:gluconeogenesis"/>
    <property type="evidence" value="ECO:0007669"/>
    <property type="project" value="UniProtKB-UniRule"/>
</dbReference>
<dbReference type="GO" id="GO:0051156">
    <property type="term" value="P:glucose 6-phosphate metabolic process"/>
    <property type="evidence" value="ECO:0007669"/>
    <property type="project" value="TreeGrafter"/>
</dbReference>
<dbReference type="GO" id="GO:0006096">
    <property type="term" value="P:glycolytic process"/>
    <property type="evidence" value="ECO:0007669"/>
    <property type="project" value="UniProtKB-UniRule"/>
</dbReference>
<dbReference type="CDD" id="cd05015">
    <property type="entry name" value="SIS_PGI_1"/>
    <property type="match status" value="1"/>
</dbReference>
<dbReference type="CDD" id="cd05016">
    <property type="entry name" value="SIS_PGI_2"/>
    <property type="match status" value="1"/>
</dbReference>
<dbReference type="FunFam" id="3.40.50.10490:FF:000015">
    <property type="entry name" value="Glucose-6-phosphate isomerase"/>
    <property type="match status" value="1"/>
</dbReference>
<dbReference type="FunFam" id="3.40.50.10490:FF:000016">
    <property type="entry name" value="Glucose-6-phosphate isomerase"/>
    <property type="match status" value="1"/>
</dbReference>
<dbReference type="Gene3D" id="3.40.50.10490">
    <property type="entry name" value="Glucose-6-phosphate isomerase like protein, domain 1"/>
    <property type="match status" value="2"/>
</dbReference>
<dbReference type="HAMAP" id="MF_00473">
    <property type="entry name" value="G6P_isomerase"/>
    <property type="match status" value="1"/>
</dbReference>
<dbReference type="InterPro" id="IPR001672">
    <property type="entry name" value="G6P_Isomerase"/>
</dbReference>
<dbReference type="InterPro" id="IPR018189">
    <property type="entry name" value="Phosphoglucose_isomerase_CS"/>
</dbReference>
<dbReference type="InterPro" id="IPR046348">
    <property type="entry name" value="SIS_dom_sf"/>
</dbReference>
<dbReference type="InterPro" id="IPR035476">
    <property type="entry name" value="SIS_PGI_1"/>
</dbReference>
<dbReference type="InterPro" id="IPR035482">
    <property type="entry name" value="SIS_PGI_2"/>
</dbReference>
<dbReference type="NCBIfam" id="NF010697">
    <property type="entry name" value="PRK14097.1"/>
    <property type="match status" value="1"/>
</dbReference>
<dbReference type="PANTHER" id="PTHR11469">
    <property type="entry name" value="GLUCOSE-6-PHOSPHATE ISOMERASE"/>
    <property type="match status" value="1"/>
</dbReference>
<dbReference type="PANTHER" id="PTHR11469:SF1">
    <property type="entry name" value="GLUCOSE-6-PHOSPHATE ISOMERASE"/>
    <property type="match status" value="1"/>
</dbReference>
<dbReference type="Pfam" id="PF00342">
    <property type="entry name" value="PGI"/>
    <property type="match status" value="1"/>
</dbReference>
<dbReference type="PRINTS" id="PR00662">
    <property type="entry name" value="G6PISOMERASE"/>
</dbReference>
<dbReference type="SUPFAM" id="SSF53697">
    <property type="entry name" value="SIS domain"/>
    <property type="match status" value="1"/>
</dbReference>
<dbReference type="PROSITE" id="PS00765">
    <property type="entry name" value="P_GLUCOSE_ISOMERASE_1"/>
    <property type="match status" value="1"/>
</dbReference>
<dbReference type="PROSITE" id="PS51463">
    <property type="entry name" value="P_GLUCOSE_ISOMERASE_3"/>
    <property type="match status" value="1"/>
</dbReference>
<gene>
    <name evidence="1" type="primary">pgi</name>
    <name type="ordered locus">CLI_3449</name>
</gene>
<sequence>MENSLSLDLTKTKPYVEEHEIQYLESIIREMDNTLGKKTGPGNKFLGWMDLPINYNKEEFARIKKAAEKIKNTCDVFIVIGIGGSYLGSRAAIEMISNTFYNNLEKNQRRVPQIYFAGNNISSTYMADLLELVKDKDICVNVISKSGTTTEPAIAFRIFKELLEKKYGKEGAKERIFATTDVAKGALRTLADLEGYETFVIPDDVGGRFSVLTPVGLLPIAVSGIDVDEMMKGAADARQEYSSDNIEKNHVYRYVAVRNALYRKGKTTEMLVNFEPCLHYFGEWWKQLYGESEGKDGKGIFPAAADFSTDLHSMGQYIQEGLRNIFETFINVENPRKSIIIKEDKENLDGLNFLAEKDMDYVNHQALRGTVLAHNDGGVPAIVLNVPELSAYYFGQLVYFFEKACGISGYLQGVNPFDQPGVEAYKKNMFALLGKPGYEDMKATLEERLK</sequence>
<accession>A7GIL4</accession>
<organism>
    <name type="scientific">Clostridium botulinum (strain Langeland / NCTC 10281 / Type F)</name>
    <dbReference type="NCBI Taxonomy" id="441772"/>
    <lineage>
        <taxon>Bacteria</taxon>
        <taxon>Bacillati</taxon>
        <taxon>Bacillota</taxon>
        <taxon>Clostridia</taxon>
        <taxon>Eubacteriales</taxon>
        <taxon>Clostridiaceae</taxon>
        <taxon>Clostridium</taxon>
    </lineage>
</organism>
<keyword id="KW-0963">Cytoplasm</keyword>
<keyword id="KW-0312">Gluconeogenesis</keyword>
<keyword id="KW-0324">Glycolysis</keyword>
<keyword id="KW-0413">Isomerase</keyword>
<evidence type="ECO:0000255" key="1">
    <source>
        <dbReference type="HAMAP-Rule" id="MF_00473"/>
    </source>
</evidence>
<name>G6PI_CLOBL</name>